<sequence length="635" mass="67698">MSSDIKIKVQSFGRFLSNMVMPNIGAFIAWGIITALFIPTGWLPNETLAKLVGPMITYLLPLLIGYTGGKLVGGERGGVVGAITTMGVIVGADMPMFLGSMIAGPLGGYCIKKFDNWVDGKIKSGFEMLVNNFSAGIIGMILAILAFLGIGPAVEVLSKILAAGVNFMVAHDMLPLASIFVEPAKILFLNNAINHGIFSPLGIQQSHELGKSIFFLIEANPGPGMGVLLAYMFFGRGSAKQSAGGAAIIHFLGGIHEIYFPYVLMNPRLILAVILGGMTGVFTLTILNGGLVSPASPGSILAVLAMTPKGAYFANIAAIIAAMAVSFVVSAVLFKTSKVKERSDIEAATRRMHDMKAESKGASPLAAGNVTNDLSHVRKIIVACDAGMGSSAMGAGVLRKKVQDAGLSNISVTNSAINNLPPDVDLVITHRDLTERAMRQVPQAQHISLTNFLDSGLYTSLTERLVAAQRHIDNEVKVTDSLKDSFDDTNNNLFQLGADNIFLGRKAATKEEANSFAGEQLVKGGYVEPEYVQAMLDREKLTSTYLGESIAVPHGTIEAKDRVLKTGVVFCQYPEGVRFGEEEDEVARLVIGIAARNNEHIQVITSLTNALDDETVIERLAKTTSVDEVLALLNK</sequence>
<reference key="1">
    <citation type="journal article" date="2001" name="FEMS Microbiol. Lett.">
        <title>The mtl genes and the mannitol-1-phosphate dehydrogenase from Klebsiella pneumoniae KAY2026.</title>
        <authorList>
            <person name="Otte S."/>
            <person name="Lengeler J.W."/>
        </authorList>
    </citation>
    <scope>NUCLEOTIDE SEQUENCE [GENOMIC DNA]</scope>
    <source>
        <strain>1033-5P14 / KAY2026</strain>
    </source>
</reference>
<accession>Q9XBM7</accession>
<comment type="function">
    <text evidence="1">The phosphoenolpyruvate-dependent sugar phosphotransferase system (sugar PTS), a major carbohydrate active transport system, catalyzes the phosphorylation of incoming sugar substrates concomitantly with their translocation across the cell membrane. This system is involved in D-mannitol transport.</text>
</comment>
<comment type="catalytic activity">
    <reaction evidence="1">
        <text>D-mannitol(out) + N(pros)-phospho-L-histidyl-[protein] = D-mannitol 1-phosphate(in) + L-histidyl-[protein]</text>
        <dbReference type="Rhea" id="RHEA:33363"/>
        <dbReference type="Rhea" id="RHEA-COMP:9745"/>
        <dbReference type="Rhea" id="RHEA-COMP:9746"/>
        <dbReference type="ChEBI" id="CHEBI:16899"/>
        <dbReference type="ChEBI" id="CHEBI:29979"/>
        <dbReference type="ChEBI" id="CHEBI:61381"/>
        <dbReference type="ChEBI" id="CHEBI:64837"/>
        <dbReference type="EC" id="2.7.1.197"/>
    </reaction>
</comment>
<comment type="subunit">
    <text evidence="1">Homodimer.</text>
</comment>
<comment type="subcellular location">
    <subcellularLocation>
        <location evidence="1 4">Cell inner membrane</location>
        <topology evidence="1 4">Multi-pass membrane protein</topology>
    </subcellularLocation>
</comment>
<comment type="induction">
    <text evidence="1">Induced by mannitol. Repressed by MltR.</text>
</comment>
<comment type="domain">
    <text evidence="4">The EIIC type-2 domain forms the PTS system translocation channel and contains the specific substrate-binding site.</text>
</comment>
<comment type="domain">
    <text evidence="3">The PTS EIIB type-2 domain is phosphorylated by phospho-EIIA on a cysteinyl residue. Then, it transfers the phosphoryl group to the sugar substrate concomitantly with the sugar uptake processed by the PTS EIIC type-2 domain.</text>
</comment>
<comment type="domain">
    <text evidence="2">The PTS EIIA type-2 domain is phosphorylated by phospho-HPr on a histidyl residue. Then, it transfers the phosphoryl group to the PTS EIIB type-2 domain.</text>
</comment>
<comment type="PTM">
    <text evidence="1">An intramolecular phosphotransfer takes places between His-554 and Cys-384.</text>
</comment>
<name>PTM3C_KLEPN</name>
<proteinExistence type="inferred from homology"/>
<dbReference type="EC" id="2.7.1.197" evidence="1"/>
<dbReference type="EMBL" id="AF166095">
    <property type="protein sequence ID" value="AAD45385.1"/>
    <property type="molecule type" value="Genomic_DNA"/>
</dbReference>
<dbReference type="SMR" id="Q9XBM7"/>
<dbReference type="GO" id="GO:0005886">
    <property type="term" value="C:plasma membrane"/>
    <property type="evidence" value="ECO:0007669"/>
    <property type="project" value="UniProtKB-SubCell"/>
</dbReference>
<dbReference type="GO" id="GO:0016301">
    <property type="term" value="F:kinase activity"/>
    <property type="evidence" value="ECO:0007669"/>
    <property type="project" value="UniProtKB-KW"/>
</dbReference>
<dbReference type="GO" id="GO:0022872">
    <property type="term" value="F:protein-N(PI)-phosphohistidine-mannitol phosphotransferase system transmembrane transporter activity"/>
    <property type="evidence" value="ECO:0007669"/>
    <property type="project" value="InterPro"/>
</dbReference>
<dbReference type="GO" id="GO:0090563">
    <property type="term" value="F:protein-phosphocysteine-sugar phosphotransferase activity"/>
    <property type="evidence" value="ECO:0007669"/>
    <property type="project" value="TreeGrafter"/>
</dbReference>
<dbReference type="GO" id="GO:0009401">
    <property type="term" value="P:phosphoenolpyruvate-dependent sugar phosphotransferase system"/>
    <property type="evidence" value="ECO:0007669"/>
    <property type="project" value="UniProtKB-KW"/>
</dbReference>
<dbReference type="CDD" id="cd00211">
    <property type="entry name" value="PTS_IIA_fru"/>
    <property type="match status" value="1"/>
</dbReference>
<dbReference type="CDD" id="cd05567">
    <property type="entry name" value="PTS_IIB_mannitol"/>
    <property type="match status" value="1"/>
</dbReference>
<dbReference type="FunFam" id="3.40.50.2300:FF:000047">
    <property type="entry name" value="PTS system mannitol-specific transporter subunit IICBA"/>
    <property type="match status" value="1"/>
</dbReference>
<dbReference type="FunFam" id="3.40.930.10:FF:000007">
    <property type="entry name" value="PTS system mannitol-specific transporter subunit IICBA"/>
    <property type="match status" value="1"/>
</dbReference>
<dbReference type="Gene3D" id="3.40.50.2300">
    <property type="match status" value="1"/>
</dbReference>
<dbReference type="Gene3D" id="3.40.930.10">
    <property type="entry name" value="Mannitol-specific EII, Chain A"/>
    <property type="match status" value="1"/>
</dbReference>
<dbReference type="InterPro" id="IPR016152">
    <property type="entry name" value="PTrfase/Anion_transptr"/>
</dbReference>
<dbReference type="InterPro" id="IPR002178">
    <property type="entry name" value="PTS_EIIA_type-2_dom"/>
</dbReference>
<dbReference type="InterPro" id="IPR036095">
    <property type="entry name" value="PTS_EIIB-like_sf"/>
</dbReference>
<dbReference type="InterPro" id="IPR013011">
    <property type="entry name" value="PTS_EIIB_2"/>
</dbReference>
<dbReference type="InterPro" id="IPR003501">
    <property type="entry name" value="PTS_EIIB_2/3"/>
</dbReference>
<dbReference type="InterPro" id="IPR029503">
    <property type="entry name" value="PTS_EIIB_mannitol"/>
</dbReference>
<dbReference type="InterPro" id="IPR003352">
    <property type="entry name" value="PTS_EIIC"/>
</dbReference>
<dbReference type="InterPro" id="IPR013014">
    <property type="entry name" value="PTS_EIIC_2"/>
</dbReference>
<dbReference type="InterPro" id="IPR004718">
    <property type="entry name" value="PTS_IIC_mtl"/>
</dbReference>
<dbReference type="InterPro" id="IPR050893">
    <property type="entry name" value="Sugar_PTS"/>
</dbReference>
<dbReference type="NCBIfam" id="TIGR00851">
    <property type="entry name" value="mtlA"/>
    <property type="match status" value="1"/>
</dbReference>
<dbReference type="NCBIfam" id="NF011663">
    <property type="entry name" value="PRK15083.1"/>
    <property type="match status" value="1"/>
</dbReference>
<dbReference type="PANTHER" id="PTHR30181">
    <property type="entry name" value="MANNITOL PERMEASE IIC COMPONENT"/>
    <property type="match status" value="1"/>
</dbReference>
<dbReference type="PANTHER" id="PTHR30181:SF2">
    <property type="entry name" value="PTS SYSTEM MANNITOL-SPECIFIC EIICBA COMPONENT"/>
    <property type="match status" value="1"/>
</dbReference>
<dbReference type="Pfam" id="PF00359">
    <property type="entry name" value="PTS_EIIA_2"/>
    <property type="match status" value="1"/>
</dbReference>
<dbReference type="Pfam" id="PF02378">
    <property type="entry name" value="PTS_EIIC"/>
    <property type="match status" value="1"/>
</dbReference>
<dbReference type="Pfam" id="PF02302">
    <property type="entry name" value="PTS_IIB"/>
    <property type="match status" value="1"/>
</dbReference>
<dbReference type="SUPFAM" id="SSF55804">
    <property type="entry name" value="Phoshotransferase/anion transport protein"/>
    <property type="match status" value="1"/>
</dbReference>
<dbReference type="SUPFAM" id="SSF52794">
    <property type="entry name" value="PTS system IIB component-like"/>
    <property type="match status" value="1"/>
</dbReference>
<dbReference type="PROSITE" id="PS51094">
    <property type="entry name" value="PTS_EIIA_TYPE_2"/>
    <property type="match status" value="1"/>
</dbReference>
<dbReference type="PROSITE" id="PS00372">
    <property type="entry name" value="PTS_EIIA_TYPE_2_HIS"/>
    <property type="match status" value="1"/>
</dbReference>
<dbReference type="PROSITE" id="PS51099">
    <property type="entry name" value="PTS_EIIB_TYPE_2"/>
    <property type="match status" value="1"/>
</dbReference>
<dbReference type="PROSITE" id="PS51104">
    <property type="entry name" value="PTS_EIIC_TYPE_2"/>
    <property type="match status" value="1"/>
</dbReference>
<feature type="chain" id="PRO_0000186615" description="PTS system mannitol-specific EIICBA component">
    <location>
        <begin position="1"/>
        <end position="635"/>
    </location>
</feature>
<feature type="transmembrane region" description="Helical" evidence="1">
    <location>
        <begin position="24"/>
        <end position="45"/>
    </location>
</feature>
<feature type="transmembrane region" description="Helical" evidence="1">
    <location>
        <begin position="50"/>
        <end position="70"/>
    </location>
</feature>
<feature type="transmembrane region" description="Helical" evidence="1">
    <location>
        <begin position="134"/>
        <end position="155"/>
    </location>
</feature>
<feature type="transmembrane region" description="Helical" evidence="1">
    <location>
        <begin position="165"/>
        <end position="185"/>
    </location>
</feature>
<feature type="transmembrane region" description="Helical" evidence="1">
    <location>
        <begin position="273"/>
        <end position="292"/>
    </location>
</feature>
<feature type="transmembrane region" description="Helical" evidence="1">
    <location>
        <begin position="313"/>
        <end position="334"/>
    </location>
</feature>
<feature type="domain" description="PTS EIIC type-2" evidence="4">
    <location>
        <begin position="12"/>
        <end position="342"/>
    </location>
</feature>
<feature type="domain" description="PTS EIIB type-2" evidence="3">
    <location>
        <begin position="378"/>
        <end position="473"/>
    </location>
</feature>
<feature type="domain" description="PTS EIIA type-2" evidence="2">
    <location>
        <begin position="494"/>
        <end position="635"/>
    </location>
</feature>
<feature type="active site" description="Phosphocysteine intermediate; for EIIB activity" evidence="1">
    <location>
        <position position="384"/>
    </location>
</feature>
<feature type="active site" description="Tele-phosphohistidine intermediate; for EIIA activity" evidence="1 2">
    <location>
        <position position="554"/>
    </location>
</feature>
<feature type="site" description="Stabilizes the transition state in the phosphoryl transfer from HPr to EIIA" evidence="1">
    <location>
        <position position="538"/>
    </location>
</feature>
<feature type="modified residue" description="Phosphocysteine; by EIIA" evidence="1 3">
    <location>
        <position position="384"/>
    </location>
</feature>
<feature type="modified residue" description="Phosphohistidine; by HPr" evidence="1">
    <location>
        <position position="554"/>
    </location>
</feature>
<organism>
    <name type="scientific">Klebsiella pneumoniae</name>
    <dbReference type="NCBI Taxonomy" id="573"/>
    <lineage>
        <taxon>Bacteria</taxon>
        <taxon>Pseudomonadati</taxon>
        <taxon>Pseudomonadota</taxon>
        <taxon>Gammaproteobacteria</taxon>
        <taxon>Enterobacterales</taxon>
        <taxon>Enterobacteriaceae</taxon>
        <taxon>Klebsiella/Raoultella group</taxon>
        <taxon>Klebsiella</taxon>
        <taxon>Klebsiella pneumoniae complex</taxon>
    </lineage>
</organism>
<keyword id="KW-0997">Cell inner membrane</keyword>
<keyword id="KW-1003">Cell membrane</keyword>
<keyword id="KW-0418">Kinase</keyword>
<keyword id="KW-0472">Membrane</keyword>
<keyword id="KW-0597">Phosphoprotein</keyword>
<keyword id="KW-0598">Phosphotransferase system</keyword>
<keyword id="KW-0762">Sugar transport</keyword>
<keyword id="KW-0808">Transferase</keyword>
<keyword id="KW-0812">Transmembrane</keyword>
<keyword id="KW-1133">Transmembrane helix</keyword>
<keyword id="KW-0813">Transport</keyword>
<gene>
    <name evidence="5" type="primary">mtlA</name>
</gene>
<protein>
    <recommendedName>
        <fullName evidence="5">PTS system mannitol-specific EIICBA component</fullName>
    </recommendedName>
    <alternativeName>
        <fullName evidence="5">EIICBA-Mtl</fullName>
        <shortName evidence="5">EII-Mtl</shortName>
    </alternativeName>
    <domain>
        <recommendedName>
            <fullName evidence="1">Mannitol permease IIC component</fullName>
        </recommendedName>
        <alternativeName>
            <fullName evidence="1">PTS system mannitol-specific EIIC component</fullName>
        </alternativeName>
    </domain>
    <domain>
        <recommendedName>
            <fullName evidence="1">Mannitol-specific phosphotransferase enzyme IIB component</fullName>
            <ecNumber evidence="1">2.7.1.197</ecNumber>
        </recommendedName>
        <alternativeName>
            <fullName evidence="1">PTS system mannitol-specific EIIB component</fullName>
        </alternativeName>
    </domain>
    <domain>
        <recommendedName>
            <fullName evidence="1">Mannitol-specific phosphotransferase enzyme IIA component</fullName>
        </recommendedName>
        <alternativeName>
            <fullName evidence="1">PTS system mannitol-specific EIIA component</fullName>
        </alternativeName>
    </domain>
</protein>
<evidence type="ECO:0000250" key="1">
    <source>
        <dbReference type="UniProtKB" id="P00550"/>
    </source>
</evidence>
<evidence type="ECO:0000255" key="2">
    <source>
        <dbReference type="PROSITE-ProRule" id="PRU00417"/>
    </source>
</evidence>
<evidence type="ECO:0000255" key="3">
    <source>
        <dbReference type="PROSITE-ProRule" id="PRU00422"/>
    </source>
</evidence>
<evidence type="ECO:0000255" key="4">
    <source>
        <dbReference type="PROSITE-ProRule" id="PRU00427"/>
    </source>
</evidence>
<evidence type="ECO:0000303" key="5">
    <source>
    </source>
</evidence>